<sequence length="343" mass="37556">MVVVGIVGASGYTGGELLRLLARHPEVEEVRYATSRRLEGKPVWKVHPNLRRDYPDLEFSDPDPVEIGEDCDVVFTAVPHTAAMELVPDLLEGGAVVIDLSADFRFDDVDVYEEWYGVEHAAPELNDEAVYGLPELHRDEIRRTDLIANPGCYPTGAILAAAPLVEEGLVDVVIFDSKSGTSGAGAKPSEVTHHPECAEDLTPYNPTDHRHLPEIRQELGKLGDVEVHFTPHLAPLVRGIETTAHGLGDVEIEPKELRELYVEYYDGEPFIRVCEVGEAPRLWAVRGTNYCDVGVFAVGDGRVVVASAIDNLTKGASGQAIQNMNVRFGFEETAGLEEPGYHP</sequence>
<dbReference type="EC" id="1.2.1.38" evidence="1"/>
<dbReference type="EMBL" id="AE009439">
    <property type="protein sequence ID" value="AAM02290.1"/>
    <property type="molecule type" value="Genomic_DNA"/>
</dbReference>
<dbReference type="RefSeq" id="WP_011019445.1">
    <property type="nucleotide sequence ID" value="NC_003551.1"/>
</dbReference>
<dbReference type="SMR" id="Q8TWF8"/>
<dbReference type="FunCoup" id="Q8TWF8">
    <property type="interactions" value="73"/>
</dbReference>
<dbReference type="STRING" id="190192.MK1077"/>
<dbReference type="PaxDb" id="190192-MK1077"/>
<dbReference type="EnsemblBacteria" id="AAM02290">
    <property type="protein sequence ID" value="AAM02290"/>
    <property type="gene ID" value="MK1077"/>
</dbReference>
<dbReference type="GeneID" id="1477178"/>
<dbReference type="KEGG" id="mka:MK1077"/>
<dbReference type="PATRIC" id="fig|190192.8.peg.1131"/>
<dbReference type="HOGENOM" id="CLU_006384_0_1_2"/>
<dbReference type="InParanoid" id="Q8TWF8"/>
<dbReference type="OrthoDB" id="372053at2157"/>
<dbReference type="UniPathway" id="UPA00068">
    <property type="reaction ID" value="UER00108"/>
</dbReference>
<dbReference type="Proteomes" id="UP000001826">
    <property type="component" value="Chromosome"/>
</dbReference>
<dbReference type="GO" id="GO:0005737">
    <property type="term" value="C:cytoplasm"/>
    <property type="evidence" value="ECO:0007669"/>
    <property type="project" value="UniProtKB-SubCell"/>
</dbReference>
<dbReference type="GO" id="GO:0003942">
    <property type="term" value="F:N-acetyl-gamma-glutamyl-phosphate reductase activity"/>
    <property type="evidence" value="ECO:0007669"/>
    <property type="project" value="UniProtKB-UniRule"/>
</dbReference>
<dbReference type="GO" id="GO:0051287">
    <property type="term" value="F:NAD binding"/>
    <property type="evidence" value="ECO:0007669"/>
    <property type="project" value="InterPro"/>
</dbReference>
<dbReference type="GO" id="GO:0070401">
    <property type="term" value="F:NADP+ binding"/>
    <property type="evidence" value="ECO:0007669"/>
    <property type="project" value="InterPro"/>
</dbReference>
<dbReference type="GO" id="GO:0006526">
    <property type="term" value="P:L-arginine biosynthetic process"/>
    <property type="evidence" value="ECO:0007669"/>
    <property type="project" value="UniProtKB-UniRule"/>
</dbReference>
<dbReference type="CDD" id="cd23934">
    <property type="entry name" value="AGPR_1_C"/>
    <property type="match status" value="1"/>
</dbReference>
<dbReference type="CDD" id="cd17895">
    <property type="entry name" value="AGPR_1_N"/>
    <property type="match status" value="1"/>
</dbReference>
<dbReference type="Gene3D" id="3.30.360.10">
    <property type="entry name" value="Dihydrodipicolinate Reductase, domain 2"/>
    <property type="match status" value="1"/>
</dbReference>
<dbReference type="Gene3D" id="3.40.50.720">
    <property type="entry name" value="NAD(P)-binding Rossmann-like Domain"/>
    <property type="match status" value="1"/>
</dbReference>
<dbReference type="HAMAP" id="MF_00150">
    <property type="entry name" value="ArgC_type1"/>
    <property type="match status" value="1"/>
</dbReference>
<dbReference type="InterPro" id="IPR023013">
    <property type="entry name" value="AGPR_AS"/>
</dbReference>
<dbReference type="InterPro" id="IPR000706">
    <property type="entry name" value="AGPR_type-1"/>
</dbReference>
<dbReference type="InterPro" id="IPR036291">
    <property type="entry name" value="NAD(P)-bd_dom_sf"/>
</dbReference>
<dbReference type="InterPro" id="IPR050085">
    <property type="entry name" value="NAGSA_dehydrogenase"/>
</dbReference>
<dbReference type="InterPro" id="IPR000534">
    <property type="entry name" value="Semialdehyde_DH_NAD-bd"/>
</dbReference>
<dbReference type="NCBIfam" id="TIGR01850">
    <property type="entry name" value="argC"/>
    <property type="match status" value="1"/>
</dbReference>
<dbReference type="PANTHER" id="PTHR32338:SF10">
    <property type="entry name" value="N-ACETYL-GAMMA-GLUTAMYL-PHOSPHATE REDUCTASE, CHLOROPLASTIC-RELATED"/>
    <property type="match status" value="1"/>
</dbReference>
<dbReference type="PANTHER" id="PTHR32338">
    <property type="entry name" value="N-ACETYL-GAMMA-GLUTAMYL-PHOSPHATE REDUCTASE, CHLOROPLASTIC-RELATED-RELATED"/>
    <property type="match status" value="1"/>
</dbReference>
<dbReference type="Pfam" id="PF01118">
    <property type="entry name" value="Semialdhyde_dh"/>
    <property type="match status" value="1"/>
</dbReference>
<dbReference type="Pfam" id="PF22698">
    <property type="entry name" value="Semialdhyde_dhC_1"/>
    <property type="match status" value="1"/>
</dbReference>
<dbReference type="SMART" id="SM00859">
    <property type="entry name" value="Semialdhyde_dh"/>
    <property type="match status" value="1"/>
</dbReference>
<dbReference type="SUPFAM" id="SSF55347">
    <property type="entry name" value="Glyceraldehyde-3-phosphate dehydrogenase-like, C-terminal domain"/>
    <property type="match status" value="1"/>
</dbReference>
<dbReference type="SUPFAM" id="SSF51735">
    <property type="entry name" value="NAD(P)-binding Rossmann-fold domains"/>
    <property type="match status" value="1"/>
</dbReference>
<dbReference type="PROSITE" id="PS01224">
    <property type="entry name" value="ARGC"/>
    <property type="match status" value="1"/>
</dbReference>
<protein>
    <recommendedName>
        <fullName evidence="1">N-acetyl-gamma-glutamyl-phosphate reductase</fullName>
        <shortName evidence="1">AGPR</shortName>
        <ecNumber evidence="1">1.2.1.38</ecNumber>
    </recommendedName>
    <alternativeName>
        <fullName evidence="1">N-acetyl-glutamate semialdehyde dehydrogenase</fullName>
        <shortName evidence="1">NAGSA dehydrogenase</shortName>
    </alternativeName>
</protein>
<organism>
    <name type="scientific">Methanopyrus kandleri (strain AV19 / DSM 6324 / JCM 9639 / NBRC 100938)</name>
    <dbReference type="NCBI Taxonomy" id="190192"/>
    <lineage>
        <taxon>Archaea</taxon>
        <taxon>Methanobacteriati</taxon>
        <taxon>Methanobacteriota</taxon>
        <taxon>Methanomada group</taxon>
        <taxon>Methanopyri</taxon>
        <taxon>Methanopyrales</taxon>
        <taxon>Methanopyraceae</taxon>
        <taxon>Methanopyrus</taxon>
    </lineage>
</organism>
<comment type="function">
    <text evidence="1">Catalyzes the NADPH-dependent reduction of N-acetyl-5-glutamyl phosphate to yield N-acetyl-L-glutamate 5-semialdehyde.</text>
</comment>
<comment type="catalytic activity">
    <reaction evidence="1">
        <text>N-acetyl-L-glutamate 5-semialdehyde + phosphate + NADP(+) = N-acetyl-L-glutamyl 5-phosphate + NADPH + H(+)</text>
        <dbReference type="Rhea" id="RHEA:21588"/>
        <dbReference type="ChEBI" id="CHEBI:15378"/>
        <dbReference type="ChEBI" id="CHEBI:29123"/>
        <dbReference type="ChEBI" id="CHEBI:43474"/>
        <dbReference type="ChEBI" id="CHEBI:57783"/>
        <dbReference type="ChEBI" id="CHEBI:57936"/>
        <dbReference type="ChEBI" id="CHEBI:58349"/>
        <dbReference type="EC" id="1.2.1.38"/>
    </reaction>
</comment>
<comment type="pathway">
    <text evidence="1">Amino-acid biosynthesis; L-arginine biosynthesis; N(2)-acetyl-L-ornithine from L-glutamate: step 3/4.</text>
</comment>
<comment type="subcellular location">
    <subcellularLocation>
        <location evidence="1">Cytoplasm</location>
    </subcellularLocation>
</comment>
<comment type="similarity">
    <text evidence="1">Belongs to the NAGSA dehydrogenase family. Type 1 subfamily.</text>
</comment>
<reference key="1">
    <citation type="journal article" date="2002" name="Proc. Natl. Acad. Sci. U.S.A.">
        <title>The complete genome of hyperthermophile Methanopyrus kandleri AV19 and monophyly of archaeal methanogens.</title>
        <authorList>
            <person name="Slesarev A.I."/>
            <person name="Mezhevaya K.V."/>
            <person name="Makarova K.S."/>
            <person name="Polushin N.N."/>
            <person name="Shcherbinina O.V."/>
            <person name="Shakhova V.V."/>
            <person name="Belova G.I."/>
            <person name="Aravind L."/>
            <person name="Natale D.A."/>
            <person name="Rogozin I.B."/>
            <person name="Tatusov R.L."/>
            <person name="Wolf Y.I."/>
            <person name="Stetter K.O."/>
            <person name="Malykh A.G."/>
            <person name="Koonin E.V."/>
            <person name="Kozyavkin S.A."/>
        </authorList>
    </citation>
    <scope>NUCLEOTIDE SEQUENCE [LARGE SCALE GENOMIC DNA]</scope>
    <source>
        <strain>AV19 / DSM 6324 / JCM 9639 / NBRC 100938</strain>
    </source>
</reference>
<name>ARGC_METKA</name>
<accession>Q8TWF8</accession>
<gene>
    <name evidence="1" type="primary">argC</name>
    <name type="ordered locus">MK1077</name>
</gene>
<evidence type="ECO:0000255" key="1">
    <source>
        <dbReference type="HAMAP-Rule" id="MF_00150"/>
    </source>
</evidence>
<feature type="chain" id="PRO_0000112487" description="N-acetyl-gamma-glutamyl-phosphate reductase">
    <location>
        <begin position="1"/>
        <end position="343"/>
    </location>
</feature>
<feature type="active site" evidence="1">
    <location>
        <position position="152"/>
    </location>
</feature>
<keyword id="KW-0028">Amino-acid biosynthesis</keyword>
<keyword id="KW-0055">Arginine biosynthesis</keyword>
<keyword id="KW-0963">Cytoplasm</keyword>
<keyword id="KW-0521">NADP</keyword>
<keyword id="KW-0560">Oxidoreductase</keyword>
<keyword id="KW-1185">Reference proteome</keyword>
<proteinExistence type="inferred from homology"/>